<evidence type="ECO:0000255" key="1">
    <source>
        <dbReference type="HAMAP-Rule" id="MF_01273"/>
    </source>
</evidence>
<dbReference type="EC" id="2.7.1.33" evidence="1"/>
<dbReference type="EMBL" id="BA000017">
    <property type="protein sequence ID" value="BAB58292.1"/>
    <property type="molecule type" value="Genomic_DNA"/>
</dbReference>
<dbReference type="RefSeq" id="WP_000862728.1">
    <property type="nucleotide sequence ID" value="NC_002758.2"/>
</dbReference>
<dbReference type="SMR" id="Q99SC8"/>
<dbReference type="KEGG" id="sav:SAV2130"/>
<dbReference type="HOGENOM" id="CLU_087521_1_0_9"/>
<dbReference type="UniPathway" id="UPA00241">
    <property type="reaction ID" value="UER00352"/>
</dbReference>
<dbReference type="Proteomes" id="UP000002481">
    <property type="component" value="Chromosome"/>
</dbReference>
<dbReference type="GO" id="GO:0005829">
    <property type="term" value="C:cytosol"/>
    <property type="evidence" value="ECO:0007669"/>
    <property type="project" value="TreeGrafter"/>
</dbReference>
<dbReference type="GO" id="GO:0005524">
    <property type="term" value="F:ATP binding"/>
    <property type="evidence" value="ECO:0007669"/>
    <property type="project" value="UniProtKB-UniRule"/>
</dbReference>
<dbReference type="GO" id="GO:0004594">
    <property type="term" value="F:pantothenate kinase activity"/>
    <property type="evidence" value="ECO:0007669"/>
    <property type="project" value="UniProtKB-UniRule"/>
</dbReference>
<dbReference type="GO" id="GO:0015937">
    <property type="term" value="P:coenzyme A biosynthetic process"/>
    <property type="evidence" value="ECO:0007669"/>
    <property type="project" value="UniProtKB-UniRule"/>
</dbReference>
<dbReference type="Gene3D" id="3.30.420.40">
    <property type="match status" value="1"/>
</dbReference>
<dbReference type="HAMAP" id="MF_01273">
    <property type="entry name" value="Pantothen_kinase_2"/>
    <property type="match status" value="1"/>
</dbReference>
<dbReference type="InterPro" id="IPR043129">
    <property type="entry name" value="ATPase_NBD"/>
</dbReference>
<dbReference type="InterPro" id="IPR004567">
    <property type="entry name" value="Type_II_PanK"/>
</dbReference>
<dbReference type="InterPro" id="IPR011602">
    <property type="entry name" value="Type_II_PanK_bac"/>
</dbReference>
<dbReference type="NCBIfam" id="TIGR00555">
    <property type="entry name" value="panK_eukar"/>
    <property type="match status" value="1"/>
</dbReference>
<dbReference type="NCBIfam" id="NF009842">
    <property type="entry name" value="PRK13317.1"/>
    <property type="match status" value="1"/>
</dbReference>
<dbReference type="PANTHER" id="PTHR12280:SF20">
    <property type="entry name" value="4'-PHOSPHOPANTETHEINE PHOSPHATASE"/>
    <property type="match status" value="1"/>
</dbReference>
<dbReference type="PANTHER" id="PTHR12280">
    <property type="entry name" value="PANTOTHENATE KINASE"/>
    <property type="match status" value="1"/>
</dbReference>
<dbReference type="Pfam" id="PF03630">
    <property type="entry name" value="Fumble"/>
    <property type="match status" value="1"/>
</dbReference>
<dbReference type="PIRSF" id="PIRSF036940">
    <property type="entry name" value="PanK_bac_aCoA"/>
    <property type="match status" value="1"/>
</dbReference>
<dbReference type="SUPFAM" id="SSF53067">
    <property type="entry name" value="Actin-like ATPase domain"/>
    <property type="match status" value="1"/>
</dbReference>
<gene>
    <name evidence="1" type="primary">coaW</name>
    <name type="ordered locus">SAV2130</name>
</gene>
<feature type="chain" id="PRO_0000261347" description="Type II pantothenate kinase">
    <location>
        <begin position="1"/>
        <end position="267"/>
    </location>
</feature>
<feature type="active site" description="Proton acceptor" evidence="1">
    <location>
        <position position="70"/>
    </location>
</feature>
<feature type="binding site" evidence="1">
    <location>
        <begin position="6"/>
        <end position="13"/>
    </location>
    <ligand>
        <name>ATP</name>
        <dbReference type="ChEBI" id="CHEBI:30616"/>
    </ligand>
</feature>
<feature type="binding site" evidence="1">
    <location>
        <position position="99"/>
    </location>
    <ligand>
        <name>ATP</name>
        <dbReference type="ChEBI" id="CHEBI:30616"/>
    </ligand>
</feature>
<feature type="binding site" evidence="1">
    <location>
        <begin position="121"/>
        <end position="125"/>
    </location>
    <ligand>
        <name>ATP</name>
        <dbReference type="ChEBI" id="CHEBI:30616"/>
    </ligand>
</feature>
<feature type="binding site" evidence="1">
    <location>
        <position position="137"/>
    </location>
    <ligand>
        <name>ATP</name>
        <dbReference type="ChEBI" id="CHEBI:30616"/>
    </ligand>
</feature>
<feature type="binding site" evidence="1">
    <location>
        <position position="225"/>
    </location>
    <ligand>
        <name>ATP</name>
        <dbReference type="ChEBI" id="CHEBI:30616"/>
    </ligand>
</feature>
<accession>Q99SC8</accession>
<reference key="1">
    <citation type="journal article" date="2001" name="Lancet">
        <title>Whole genome sequencing of meticillin-resistant Staphylococcus aureus.</title>
        <authorList>
            <person name="Kuroda M."/>
            <person name="Ohta T."/>
            <person name="Uchiyama I."/>
            <person name="Baba T."/>
            <person name="Yuzawa H."/>
            <person name="Kobayashi I."/>
            <person name="Cui L."/>
            <person name="Oguchi A."/>
            <person name="Aoki K."/>
            <person name="Nagai Y."/>
            <person name="Lian J.-Q."/>
            <person name="Ito T."/>
            <person name="Kanamori M."/>
            <person name="Matsumaru H."/>
            <person name="Maruyama A."/>
            <person name="Murakami H."/>
            <person name="Hosoyama A."/>
            <person name="Mizutani-Ui Y."/>
            <person name="Takahashi N.K."/>
            <person name="Sawano T."/>
            <person name="Inoue R."/>
            <person name="Kaito C."/>
            <person name="Sekimizu K."/>
            <person name="Hirakawa H."/>
            <person name="Kuhara S."/>
            <person name="Goto S."/>
            <person name="Yabuzaki J."/>
            <person name="Kanehisa M."/>
            <person name="Yamashita A."/>
            <person name="Oshima K."/>
            <person name="Furuya K."/>
            <person name="Yoshino C."/>
            <person name="Shiba T."/>
            <person name="Hattori M."/>
            <person name="Ogasawara N."/>
            <person name="Hayashi H."/>
            <person name="Hiramatsu K."/>
        </authorList>
    </citation>
    <scope>NUCLEOTIDE SEQUENCE [LARGE SCALE GENOMIC DNA]</scope>
    <source>
        <strain>Mu50 / ATCC 700699</strain>
    </source>
</reference>
<protein>
    <recommendedName>
        <fullName evidence="1">Type II pantothenate kinase</fullName>
        <ecNumber evidence="1">2.7.1.33</ecNumber>
    </recommendedName>
    <alternativeName>
        <fullName evidence="1">PanK-II</fullName>
    </alternativeName>
    <alternativeName>
        <fullName evidence="1">Pantothenic acid kinase</fullName>
    </alternativeName>
</protein>
<name>COAW_STAAM</name>
<comment type="function">
    <text evidence="1">Catalyzes the phosphorylation of pantothenate (Pan), the first step in CoA biosynthesis.</text>
</comment>
<comment type="catalytic activity">
    <reaction evidence="1">
        <text>(R)-pantothenate + ATP = (R)-4'-phosphopantothenate + ADP + H(+)</text>
        <dbReference type="Rhea" id="RHEA:16373"/>
        <dbReference type="ChEBI" id="CHEBI:10986"/>
        <dbReference type="ChEBI" id="CHEBI:15378"/>
        <dbReference type="ChEBI" id="CHEBI:29032"/>
        <dbReference type="ChEBI" id="CHEBI:30616"/>
        <dbReference type="ChEBI" id="CHEBI:456216"/>
        <dbReference type="EC" id="2.7.1.33"/>
    </reaction>
</comment>
<comment type="pathway">
    <text evidence="1">Cofactor biosynthesis; coenzyme A biosynthesis; CoA from (R)-pantothenate: step 1/5.</text>
</comment>
<comment type="subunit">
    <text evidence="1">Homodimer.</text>
</comment>
<comment type="subcellular location">
    <subcellularLocation>
        <location evidence="1">Cytoplasm</location>
    </subcellularLocation>
</comment>
<comment type="similarity">
    <text evidence="1">Belongs to the type II pantothenate kinase family.</text>
</comment>
<proteinExistence type="inferred from homology"/>
<organism>
    <name type="scientific">Staphylococcus aureus (strain Mu50 / ATCC 700699)</name>
    <dbReference type="NCBI Taxonomy" id="158878"/>
    <lineage>
        <taxon>Bacteria</taxon>
        <taxon>Bacillati</taxon>
        <taxon>Bacillota</taxon>
        <taxon>Bacilli</taxon>
        <taxon>Bacillales</taxon>
        <taxon>Staphylococcaceae</taxon>
        <taxon>Staphylococcus</taxon>
    </lineage>
</organism>
<keyword id="KW-0067">ATP-binding</keyword>
<keyword id="KW-0173">Coenzyme A biosynthesis</keyword>
<keyword id="KW-0963">Cytoplasm</keyword>
<keyword id="KW-0418">Kinase</keyword>
<keyword id="KW-0547">Nucleotide-binding</keyword>
<keyword id="KW-0808">Transferase</keyword>
<sequence length="267" mass="29025">MKVGIDAGGTLIKIVQEQDNQRTFKTELTKNIDQVVEWLNQQQIEKLCLTGGNAGVIAENINIPAQIFVEFDAASQGLGILLKEQGHDLADYIFANVGTGTSLHYFDGQSQRRVGGIGTGGGMIQGLGYLLSQITDYKQLTDMAQHGDRNTIDLKVRHIYKDTEPPIPGDLTAANFGHVLHHLDADFTPSNKLAAVIGVVGEVVTTMAITVAREFKTENIVYIGSSFHNNALLRKVVEDYTVLRGCKPYYVENGAFSGAIGALYLGK</sequence>